<accession>P0C9Q8</accession>
<gene>
    <name type="ordered locus">War-048</name>
</gene>
<dbReference type="EMBL" id="AY261366">
    <property type="status" value="NOT_ANNOTATED_CDS"/>
    <property type="molecule type" value="Genomic_DNA"/>
</dbReference>
<dbReference type="Proteomes" id="UP000000858">
    <property type="component" value="Segment"/>
</dbReference>
<name>36015_ASFWA</name>
<organism>
    <name type="scientific">African swine fever virus (isolate Warthog/Namibia/Wart80/1980)</name>
    <name type="common">ASFV</name>
    <dbReference type="NCBI Taxonomy" id="561444"/>
    <lineage>
        <taxon>Viruses</taxon>
        <taxon>Varidnaviria</taxon>
        <taxon>Bamfordvirae</taxon>
        <taxon>Nucleocytoviricota</taxon>
        <taxon>Pokkesviricetes</taxon>
        <taxon>Asfuvirales</taxon>
        <taxon>Asfarviridae</taxon>
        <taxon>Asfivirus</taxon>
        <taxon>African swine fever virus</taxon>
    </lineage>
</organism>
<protein>
    <recommendedName>
        <fullName>Protein MGF 360-15R</fullName>
    </recommendedName>
</protein>
<sequence length="276" mass="31713">MVLIEFLTGFFYLYGKRLFSISKVMDMICLDYYTIIPAPLAMMLAARLKNYDLMKRLHEWEISVDYALLVVDDVPSIDFCLSLGAKSPTRAQKRELLRDNTFNPVYKYLMNCSGFPTKREKNIPCDVQCERLQKNIIKELVFNCSVLLEMVLHTEREYAYALHCAAKHNQLPILMYCWQQSTDAESILLKTCCSDKNINCFNYCILYGGAQNLDAAMVEAAKHDARMLINYCVMLGGRSLNEAKETAAMFGHIECAQHCFKLQSYVMDTLNVDETD</sequence>
<organismHost>
    <name type="scientific">Ornithodoros</name>
    <name type="common">relapsing fever ticks</name>
    <dbReference type="NCBI Taxonomy" id="6937"/>
</organismHost>
<organismHost>
    <name type="scientific">Phacochoerus aethiopicus</name>
    <name type="common">Warthog</name>
    <dbReference type="NCBI Taxonomy" id="85517"/>
</organismHost>
<organismHost>
    <name type="scientific">Phacochoerus africanus</name>
    <name type="common">Warthog</name>
    <dbReference type="NCBI Taxonomy" id="41426"/>
</organismHost>
<organismHost>
    <name type="scientific">Potamochoerus larvatus</name>
    <name type="common">Bushpig</name>
    <dbReference type="NCBI Taxonomy" id="273792"/>
</organismHost>
<organismHost>
    <name type="scientific">Sus scrofa</name>
    <name type="common">Pig</name>
    <dbReference type="NCBI Taxonomy" id="9823"/>
</organismHost>
<proteinExistence type="inferred from homology"/>
<reference key="1">
    <citation type="submission" date="2003-03" db="EMBL/GenBank/DDBJ databases">
        <title>African swine fever virus genomes.</title>
        <authorList>
            <person name="Kutish G.F."/>
            <person name="Rock D.L."/>
        </authorList>
    </citation>
    <scope>NUCLEOTIDE SEQUENCE [LARGE SCALE GENOMIC DNA]</scope>
</reference>
<evidence type="ECO:0000250" key="1"/>
<evidence type="ECO:0000305" key="2"/>
<feature type="chain" id="PRO_0000373293" description="Protein MGF 360-15R">
    <location>
        <begin position="1"/>
        <end position="276"/>
    </location>
</feature>
<comment type="function">
    <text evidence="1">Plays a role in virus cell tropism, and may be required for efficient virus replication in macrophages.</text>
</comment>
<comment type="similarity">
    <text evidence="2">Belongs to the asfivirus MGF 360 family.</text>
</comment>